<sequence>MDKKLLEILACPVCKSSLIYKKADQELICKACRLAYPIRDDIPVMLEEQARQFDPEEEI</sequence>
<protein>
    <recommendedName>
        <fullName evidence="1">UPF0434 protein Noc_2677</fullName>
    </recommendedName>
</protein>
<comment type="similarity">
    <text evidence="1">Belongs to the UPF0434 family.</text>
</comment>
<feature type="chain" id="PRO_0000291121" description="UPF0434 protein Noc_2677">
    <location>
        <begin position="1"/>
        <end position="59"/>
    </location>
</feature>
<dbReference type="EMBL" id="CP000127">
    <property type="protein sequence ID" value="ABA59130.1"/>
    <property type="molecule type" value="Genomic_DNA"/>
</dbReference>
<dbReference type="RefSeq" id="WP_002812993.1">
    <property type="nucleotide sequence ID" value="NC_007484.1"/>
</dbReference>
<dbReference type="SMR" id="Q3J7R6"/>
<dbReference type="FunCoup" id="Q3J7R6">
    <property type="interactions" value="183"/>
</dbReference>
<dbReference type="STRING" id="323261.Noc_2677"/>
<dbReference type="KEGG" id="noc:Noc_2677"/>
<dbReference type="eggNOG" id="COG2835">
    <property type="taxonomic scope" value="Bacteria"/>
</dbReference>
<dbReference type="HOGENOM" id="CLU_155659_3_1_6"/>
<dbReference type="InParanoid" id="Q3J7R6"/>
<dbReference type="Proteomes" id="UP000006838">
    <property type="component" value="Chromosome"/>
</dbReference>
<dbReference type="GO" id="GO:0005829">
    <property type="term" value="C:cytosol"/>
    <property type="evidence" value="ECO:0007669"/>
    <property type="project" value="TreeGrafter"/>
</dbReference>
<dbReference type="FunFam" id="2.20.25.10:FF:000002">
    <property type="entry name" value="UPF0434 protein YcaR"/>
    <property type="match status" value="1"/>
</dbReference>
<dbReference type="Gene3D" id="2.20.25.10">
    <property type="match status" value="1"/>
</dbReference>
<dbReference type="HAMAP" id="MF_01187">
    <property type="entry name" value="UPF0434"/>
    <property type="match status" value="1"/>
</dbReference>
<dbReference type="InterPro" id="IPR005651">
    <property type="entry name" value="Trm112-like"/>
</dbReference>
<dbReference type="PANTHER" id="PTHR33505:SF4">
    <property type="entry name" value="PROTEIN PREY, MITOCHONDRIAL"/>
    <property type="match status" value="1"/>
</dbReference>
<dbReference type="PANTHER" id="PTHR33505">
    <property type="entry name" value="ZGC:162634"/>
    <property type="match status" value="1"/>
</dbReference>
<dbReference type="Pfam" id="PF03966">
    <property type="entry name" value="Trm112p"/>
    <property type="match status" value="1"/>
</dbReference>
<dbReference type="SUPFAM" id="SSF158997">
    <property type="entry name" value="Trm112p-like"/>
    <property type="match status" value="1"/>
</dbReference>
<gene>
    <name type="ordered locus">Noc_2677</name>
</gene>
<keyword id="KW-1185">Reference proteome</keyword>
<reference key="1">
    <citation type="journal article" date="2006" name="Appl. Environ. Microbiol.">
        <title>Complete genome sequence of the marine, chemolithoautotrophic, ammonia-oxidizing bacterium Nitrosococcus oceani ATCC 19707.</title>
        <authorList>
            <person name="Klotz M.G."/>
            <person name="Arp D.J."/>
            <person name="Chain P.S.G."/>
            <person name="El-Sheikh A.F."/>
            <person name="Hauser L.J."/>
            <person name="Hommes N.G."/>
            <person name="Larimer F.W."/>
            <person name="Malfatti S.A."/>
            <person name="Norton J.M."/>
            <person name="Poret-Peterson A.T."/>
            <person name="Vergez L.M."/>
            <person name="Ward B.B."/>
        </authorList>
    </citation>
    <scope>NUCLEOTIDE SEQUENCE [LARGE SCALE GENOMIC DNA]</scope>
    <source>
        <strain>ATCC 19707 / BCRC 17464 / JCM 30415 / NCIMB 11848 / C-107</strain>
    </source>
</reference>
<evidence type="ECO:0000255" key="1">
    <source>
        <dbReference type="HAMAP-Rule" id="MF_01187"/>
    </source>
</evidence>
<accession>Q3J7R6</accession>
<organism>
    <name type="scientific">Nitrosococcus oceani (strain ATCC 19707 / BCRC 17464 / JCM 30415 / NCIMB 11848 / C-107)</name>
    <dbReference type="NCBI Taxonomy" id="323261"/>
    <lineage>
        <taxon>Bacteria</taxon>
        <taxon>Pseudomonadati</taxon>
        <taxon>Pseudomonadota</taxon>
        <taxon>Gammaproteobacteria</taxon>
        <taxon>Chromatiales</taxon>
        <taxon>Chromatiaceae</taxon>
        <taxon>Nitrosococcus</taxon>
    </lineage>
</organism>
<name>Y2677_NITOC</name>
<proteinExistence type="inferred from homology"/>